<name>PIP82_DROME</name>
<accession>Q9W3E2</accession>
<accession>C0HBU3</accession>
<accession>O61732</accession>
<comment type="function">
    <text evidence="3">Required for the morphological differentiation and maintenance of the rhabdomeric photoreceptor apical domain (PubMed:32579558). Acts as a downstream component of the gl and Pph13 transcriptional pathway which is required for photoreceptor cell development (PubMed:32579558). Likely to function by regulating the trafficking or retention of rhabdomeric proteins including the phototransduction proteins ninaE and didum (PubMed:32579558).</text>
</comment>
<comment type="subcellular location">
    <subcellularLocation>
        <location evidence="2 3">Cytoplasm</location>
        <location evidence="2 3">Cell cortex</location>
    </subcellularLocation>
    <subcellularLocation>
        <location evidence="2 3">Cytoplasm</location>
        <location evidence="2 3">Cytosol</location>
    </subcellularLocation>
    <subcellularLocation>
        <location evidence="3">Cell projection</location>
        <location evidence="3">Rhabdomere</location>
    </subcellularLocation>
    <text evidence="2 3">Cortical membrane protein (PubMed:26481050, PubMed:32579558). In photoreceptors, restricted to the rhabdomeric portion of the apical surface (PubMed:32579558). Localizes to the terminal web at the base of the rhabdomere and not to the microvilli (PubMed:32579558). Phosphorylation appears to displace it from the cortex, increasing cytosol levels (PubMed:26481050, PubMed:32579558).</text>
</comment>
<comment type="tissue specificity">
    <text evidence="3">Restricted to photoreceptor cells (at protein level) (PubMed:32579558). Not detected until approximately 48hrs after puparium formation (APF) and then maintained in the photoreceptor cells post-eclosion (at protein level) (PubMed:32579558).</text>
</comment>
<comment type="domain">
    <text evidence="2 3">The phospho-regulated basic and hydrophobic (PRBH) motif is sufficient and important for interaction with phospholipids permitting cortical localization (PubMed:26481050). Phosphorylation of the PRBH motif by aPKC inhibits the association of the protein with the cortical membrane (PubMed:26481050, PubMed:32579558).</text>
</comment>
<comment type="PTM">
    <text evidence="2 3 4">Phosphorylated by aPKC which lowers lipid affinity and promotes dissociation from the cell cortex (PubMed:26481050, PubMed:32579558). In the photoreceptor cells, aPKC-mediated phosphorylation leads to its displacement from the stalk apical cortex and thus restricts its localization to the rhabdomeric apical cortex where it functions (PubMed:32579558). Dephosphorylation appears to be light-dependent (PubMed:9697866).</text>
</comment>
<comment type="disruption phenotype">
    <text evidence="3">Viable however, rhabdomeres are flat and oblong, and alignment or organization of the microvillar projections along the depth of the retina are not maintained (PubMed:32579558). Severity of the phenotype increases with age, by seven days post-eclosion rhabdomeres have become irregular, misaligned and fragmented structures (PubMed:32579558). The phototransduction proteins ninaE and, to a much lesser extent, didum are displaced from vesicles near the rhabdomere terminal web and instead become mislocalized to the basal lateral membranes (PubMed:32579558). Photoactivation of ninaE and phototransduction are unaffected, and amplitudes of light response is enhanced at higher light intensities (PubMed:32579558).</text>
</comment>
<protein>
    <recommendedName>
        <fullName evidence="5">Protein PIP82</fullName>
    </recommendedName>
</protein>
<gene>
    <name evidence="5 9" type="primary">PIP82</name>
    <name evidence="9" type="ORF">CG11219</name>
</gene>
<evidence type="ECO:0000256" key="1">
    <source>
        <dbReference type="SAM" id="MobiDB-lite"/>
    </source>
</evidence>
<evidence type="ECO:0000269" key="2">
    <source>
    </source>
</evidence>
<evidence type="ECO:0000269" key="3">
    <source>
    </source>
</evidence>
<evidence type="ECO:0000269" key="4">
    <source>
    </source>
</evidence>
<evidence type="ECO:0000303" key="5">
    <source>
    </source>
</evidence>
<evidence type="ECO:0000305" key="6"/>
<evidence type="ECO:0000312" key="7">
    <source>
        <dbReference type="EMBL" id="AAC18395.1"/>
    </source>
</evidence>
<evidence type="ECO:0000312" key="8">
    <source>
        <dbReference type="EMBL" id="ACN12159.1"/>
    </source>
</evidence>
<evidence type="ECO:0000312" key="9">
    <source>
        <dbReference type="FlyBase" id="FBgn0024943"/>
    </source>
</evidence>
<evidence type="ECO:0000312" key="10">
    <source>
        <dbReference type="Proteomes" id="UP000000803"/>
    </source>
</evidence>
<keyword id="KW-0966">Cell projection</keyword>
<keyword id="KW-0963">Cytoplasm</keyword>
<keyword id="KW-1185">Reference proteome</keyword>
<proteinExistence type="evidence at protein level"/>
<reference evidence="7" key="1">
    <citation type="journal article" date="1998" name="Neuron">
        <title>Evidence that the TIM light response is relevant to light-induced phase shifts in Drosophila melanogaster.</title>
        <authorList>
            <person name="Suri V."/>
            <person name="Qian Z."/>
            <person name="Hall J.C."/>
            <person name="Rosbash M."/>
        </authorList>
    </citation>
    <scope>NUCLEOTIDE SEQUENCE [MRNA]</scope>
    <scope>PHOSPHORYLATION</scope>
    <source>
        <strain evidence="7">Canton-S</strain>
    </source>
</reference>
<reference evidence="10" key="2">
    <citation type="journal article" date="2000" name="Science">
        <title>The genome sequence of Drosophila melanogaster.</title>
        <authorList>
            <person name="Adams M.D."/>
            <person name="Celniker S.E."/>
            <person name="Holt R.A."/>
            <person name="Evans C.A."/>
            <person name="Gocayne J.D."/>
            <person name="Amanatides P.G."/>
            <person name="Scherer S.E."/>
            <person name="Li P.W."/>
            <person name="Hoskins R.A."/>
            <person name="Galle R.F."/>
            <person name="George R.A."/>
            <person name="Lewis S.E."/>
            <person name="Richards S."/>
            <person name="Ashburner M."/>
            <person name="Henderson S.N."/>
            <person name="Sutton G.G."/>
            <person name="Wortman J.R."/>
            <person name="Yandell M.D."/>
            <person name="Zhang Q."/>
            <person name="Chen L.X."/>
            <person name="Brandon R.C."/>
            <person name="Rogers Y.-H.C."/>
            <person name="Blazej R.G."/>
            <person name="Champe M."/>
            <person name="Pfeiffer B.D."/>
            <person name="Wan K.H."/>
            <person name="Doyle C."/>
            <person name="Baxter E.G."/>
            <person name="Helt G."/>
            <person name="Nelson C.R."/>
            <person name="Miklos G.L.G."/>
            <person name="Abril J.F."/>
            <person name="Agbayani A."/>
            <person name="An H.-J."/>
            <person name="Andrews-Pfannkoch C."/>
            <person name="Baldwin D."/>
            <person name="Ballew R.M."/>
            <person name="Basu A."/>
            <person name="Baxendale J."/>
            <person name="Bayraktaroglu L."/>
            <person name="Beasley E.M."/>
            <person name="Beeson K.Y."/>
            <person name="Benos P.V."/>
            <person name="Berman B.P."/>
            <person name="Bhandari D."/>
            <person name="Bolshakov S."/>
            <person name="Borkova D."/>
            <person name="Botchan M.R."/>
            <person name="Bouck J."/>
            <person name="Brokstein P."/>
            <person name="Brottier P."/>
            <person name="Burtis K.C."/>
            <person name="Busam D.A."/>
            <person name="Butler H."/>
            <person name="Cadieu E."/>
            <person name="Center A."/>
            <person name="Chandra I."/>
            <person name="Cherry J.M."/>
            <person name="Cawley S."/>
            <person name="Dahlke C."/>
            <person name="Davenport L.B."/>
            <person name="Davies P."/>
            <person name="de Pablos B."/>
            <person name="Delcher A."/>
            <person name="Deng Z."/>
            <person name="Mays A.D."/>
            <person name="Dew I."/>
            <person name="Dietz S.M."/>
            <person name="Dodson K."/>
            <person name="Doup L.E."/>
            <person name="Downes M."/>
            <person name="Dugan-Rocha S."/>
            <person name="Dunkov B.C."/>
            <person name="Dunn P."/>
            <person name="Durbin K.J."/>
            <person name="Evangelista C.C."/>
            <person name="Ferraz C."/>
            <person name="Ferriera S."/>
            <person name="Fleischmann W."/>
            <person name="Fosler C."/>
            <person name="Gabrielian A.E."/>
            <person name="Garg N.S."/>
            <person name="Gelbart W.M."/>
            <person name="Glasser K."/>
            <person name="Glodek A."/>
            <person name="Gong F."/>
            <person name="Gorrell J.H."/>
            <person name="Gu Z."/>
            <person name="Guan P."/>
            <person name="Harris M."/>
            <person name="Harris N.L."/>
            <person name="Harvey D.A."/>
            <person name="Heiman T.J."/>
            <person name="Hernandez J.R."/>
            <person name="Houck J."/>
            <person name="Hostin D."/>
            <person name="Houston K.A."/>
            <person name="Howland T.J."/>
            <person name="Wei M.-H."/>
            <person name="Ibegwam C."/>
            <person name="Jalali M."/>
            <person name="Kalush F."/>
            <person name="Karpen G.H."/>
            <person name="Ke Z."/>
            <person name="Kennison J.A."/>
            <person name="Ketchum K.A."/>
            <person name="Kimmel B.E."/>
            <person name="Kodira C.D."/>
            <person name="Kraft C.L."/>
            <person name="Kravitz S."/>
            <person name="Kulp D."/>
            <person name="Lai Z."/>
            <person name="Lasko P."/>
            <person name="Lei Y."/>
            <person name="Levitsky A.A."/>
            <person name="Li J.H."/>
            <person name="Li Z."/>
            <person name="Liang Y."/>
            <person name="Lin X."/>
            <person name="Liu X."/>
            <person name="Mattei B."/>
            <person name="McIntosh T.C."/>
            <person name="McLeod M.P."/>
            <person name="McPherson D."/>
            <person name="Merkulov G."/>
            <person name="Milshina N.V."/>
            <person name="Mobarry C."/>
            <person name="Morris J."/>
            <person name="Moshrefi A."/>
            <person name="Mount S.M."/>
            <person name="Moy M."/>
            <person name="Murphy B."/>
            <person name="Murphy L."/>
            <person name="Muzny D.M."/>
            <person name="Nelson D.L."/>
            <person name="Nelson D.R."/>
            <person name="Nelson K.A."/>
            <person name="Nixon K."/>
            <person name="Nusskern D.R."/>
            <person name="Pacleb J.M."/>
            <person name="Palazzolo M."/>
            <person name="Pittman G.S."/>
            <person name="Pan S."/>
            <person name="Pollard J."/>
            <person name="Puri V."/>
            <person name="Reese M.G."/>
            <person name="Reinert K."/>
            <person name="Remington K."/>
            <person name="Saunders R.D.C."/>
            <person name="Scheeler F."/>
            <person name="Shen H."/>
            <person name="Shue B.C."/>
            <person name="Siden-Kiamos I."/>
            <person name="Simpson M."/>
            <person name="Skupski M.P."/>
            <person name="Smith T.J."/>
            <person name="Spier E."/>
            <person name="Spradling A.C."/>
            <person name="Stapleton M."/>
            <person name="Strong R."/>
            <person name="Sun E."/>
            <person name="Svirskas R."/>
            <person name="Tector C."/>
            <person name="Turner R."/>
            <person name="Venter E."/>
            <person name="Wang A.H."/>
            <person name="Wang X."/>
            <person name="Wang Z.-Y."/>
            <person name="Wassarman D.A."/>
            <person name="Weinstock G.M."/>
            <person name="Weissenbach J."/>
            <person name="Williams S.M."/>
            <person name="Woodage T."/>
            <person name="Worley K.C."/>
            <person name="Wu D."/>
            <person name="Yang S."/>
            <person name="Yao Q.A."/>
            <person name="Ye J."/>
            <person name="Yeh R.-F."/>
            <person name="Zaveri J.S."/>
            <person name="Zhan M."/>
            <person name="Zhang G."/>
            <person name="Zhao Q."/>
            <person name="Zheng L."/>
            <person name="Zheng X.H."/>
            <person name="Zhong F.N."/>
            <person name="Zhong W."/>
            <person name="Zhou X."/>
            <person name="Zhu S.C."/>
            <person name="Zhu X."/>
            <person name="Smith H.O."/>
            <person name="Gibbs R.A."/>
            <person name="Myers E.W."/>
            <person name="Rubin G.M."/>
            <person name="Venter J.C."/>
        </authorList>
    </citation>
    <scope>NUCLEOTIDE SEQUENCE [LARGE SCALE GENOMIC DNA]</scope>
    <source>
        <strain evidence="10">Berkeley</strain>
    </source>
</reference>
<reference evidence="10" key="3">
    <citation type="journal article" date="2002" name="Genome Biol.">
        <title>Annotation of the Drosophila melanogaster euchromatic genome: a systematic review.</title>
        <authorList>
            <person name="Misra S."/>
            <person name="Crosby M.A."/>
            <person name="Mungall C.J."/>
            <person name="Matthews B.B."/>
            <person name="Campbell K.S."/>
            <person name="Hradecky P."/>
            <person name="Huang Y."/>
            <person name="Kaminker J.S."/>
            <person name="Millburn G.H."/>
            <person name="Prochnik S.E."/>
            <person name="Smith C.D."/>
            <person name="Tupy J.L."/>
            <person name="Whitfield E.J."/>
            <person name="Bayraktaroglu L."/>
            <person name="Berman B.P."/>
            <person name="Bettencourt B.R."/>
            <person name="Celniker S.E."/>
            <person name="de Grey A.D.N.J."/>
            <person name="Drysdale R.A."/>
            <person name="Harris N.L."/>
            <person name="Richter J."/>
            <person name="Russo S."/>
            <person name="Schroeder A.J."/>
            <person name="Shu S.Q."/>
            <person name="Stapleton M."/>
            <person name="Yamada C."/>
            <person name="Ashburner M."/>
            <person name="Gelbart W.M."/>
            <person name="Rubin G.M."/>
            <person name="Lewis S.E."/>
        </authorList>
    </citation>
    <scope>GENOME REANNOTATION</scope>
    <source>
        <strain evidence="10">Berkeley</strain>
    </source>
</reference>
<reference evidence="8" key="4">
    <citation type="submission" date="2009-02" db="EMBL/GenBank/DDBJ databases">
        <authorList>
            <person name="Carlson J."/>
            <person name="Booth B."/>
            <person name="Frise E."/>
            <person name="Sandler J."/>
            <person name="Wan K."/>
            <person name="Yu C."/>
            <person name="Celniker S."/>
        </authorList>
    </citation>
    <scope>NUCLEOTIDE SEQUENCE [LARGE SCALE MRNA] OF 1-367</scope>
    <source>
        <strain evidence="10">Berkeley</strain>
    </source>
</reference>
<reference evidence="6" key="5">
    <citation type="journal article" date="2015" name="Dev. Cell">
        <title>Establishment of Par-Polarized Cortical Domains via Phosphoregulated Membrane Motifs.</title>
        <authorList>
            <person name="Bailey M.J."/>
            <person name="Prehoda K.E."/>
        </authorList>
    </citation>
    <scope>SUBCELLULAR LOCATION</scope>
    <scope>DOMAIN</scope>
    <scope>PHOSPHORYLATION</scope>
</reference>
<reference evidence="6" key="6">
    <citation type="journal article" date="2020" name="PLoS Genet.">
        <title>The brachyceran de novo gene PIP82, a phosphorylation target of aPKC, is essential for proper formation and maintenance of the rhabdomeric photoreceptor apical domain in Drosophila.</title>
        <authorList>
            <person name="Zelhof A.C."/>
            <person name="Mahato S."/>
            <person name="Liang X."/>
            <person name="Rylee J."/>
            <person name="Bergh E."/>
            <person name="Feder L.E."/>
            <person name="Larsen M.E."/>
            <person name="Britt S.G."/>
            <person name="Friedrich M."/>
        </authorList>
    </citation>
    <scope>FUNCTION</scope>
    <scope>SUBCELLULAR LOCATION</scope>
    <scope>TISSUE SPECIFICITY</scope>
    <scope>DOMAIN</scope>
    <scope>PHOSPHORYLATION</scope>
    <scope>DISRUPTION PHENOTYPE</scope>
</reference>
<feature type="chain" id="PRO_0000451416" description="Protein PIP82">
    <location>
        <begin position="1"/>
        <end position="1195"/>
    </location>
</feature>
<feature type="region of interest" description="Disordered" evidence="1">
    <location>
        <begin position="1"/>
        <end position="55"/>
    </location>
</feature>
<feature type="region of interest" description="Disordered" evidence="1">
    <location>
        <begin position="85"/>
        <end position="132"/>
    </location>
</feature>
<feature type="region of interest" description="Disordered" evidence="1">
    <location>
        <begin position="291"/>
        <end position="471"/>
    </location>
</feature>
<feature type="region of interest" description="Phospho-regulated basic and hydrophobic (PRBH) motif" evidence="2 3">
    <location>
        <begin position="400"/>
        <end position="450"/>
    </location>
</feature>
<feature type="region of interest" description="Disordered" evidence="1">
    <location>
        <begin position="493"/>
        <end position="515"/>
    </location>
</feature>
<feature type="region of interest" description="Disordered" evidence="1">
    <location>
        <begin position="544"/>
        <end position="567"/>
    </location>
</feature>
<feature type="region of interest" description="Disordered" evidence="1">
    <location>
        <begin position="613"/>
        <end position="637"/>
    </location>
</feature>
<feature type="region of interest" description="Disordered" evidence="1">
    <location>
        <begin position="702"/>
        <end position="771"/>
    </location>
</feature>
<feature type="region of interest" description="Disordered" evidence="1">
    <location>
        <begin position="833"/>
        <end position="977"/>
    </location>
</feature>
<feature type="region of interest" description="Disordered" evidence="1">
    <location>
        <begin position="1060"/>
        <end position="1195"/>
    </location>
</feature>
<feature type="compositionally biased region" description="Low complexity" evidence="1">
    <location>
        <begin position="1"/>
        <end position="10"/>
    </location>
</feature>
<feature type="compositionally biased region" description="Basic residues" evidence="1">
    <location>
        <begin position="11"/>
        <end position="26"/>
    </location>
</feature>
<feature type="compositionally biased region" description="Basic and acidic residues" evidence="1">
    <location>
        <begin position="37"/>
        <end position="50"/>
    </location>
</feature>
<feature type="compositionally biased region" description="Low complexity" evidence="1">
    <location>
        <begin position="109"/>
        <end position="118"/>
    </location>
</feature>
<feature type="compositionally biased region" description="Polar residues" evidence="1">
    <location>
        <begin position="119"/>
        <end position="132"/>
    </location>
</feature>
<feature type="compositionally biased region" description="Basic and acidic residues" evidence="1">
    <location>
        <begin position="300"/>
        <end position="313"/>
    </location>
</feature>
<feature type="compositionally biased region" description="Low complexity" evidence="1">
    <location>
        <begin position="351"/>
        <end position="360"/>
    </location>
</feature>
<feature type="compositionally biased region" description="Pro residues" evidence="1">
    <location>
        <begin position="361"/>
        <end position="371"/>
    </location>
</feature>
<feature type="compositionally biased region" description="Basic residues" evidence="1">
    <location>
        <begin position="422"/>
        <end position="438"/>
    </location>
</feature>
<feature type="compositionally biased region" description="Basic and acidic residues" evidence="1">
    <location>
        <begin position="494"/>
        <end position="505"/>
    </location>
</feature>
<feature type="compositionally biased region" description="Polar residues" evidence="1">
    <location>
        <begin position="545"/>
        <end position="560"/>
    </location>
</feature>
<feature type="compositionally biased region" description="Polar residues" evidence="1">
    <location>
        <begin position="732"/>
        <end position="742"/>
    </location>
</feature>
<feature type="compositionally biased region" description="Polar residues" evidence="1">
    <location>
        <begin position="856"/>
        <end position="867"/>
    </location>
</feature>
<feature type="compositionally biased region" description="Acidic residues" evidence="1">
    <location>
        <begin position="872"/>
        <end position="891"/>
    </location>
</feature>
<feature type="compositionally biased region" description="Pro residues" evidence="1">
    <location>
        <begin position="898"/>
        <end position="910"/>
    </location>
</feature>
<feature type="compositionally biased region" description="Pro residues" evidence="1">
    <location>
        <begin position="925"/>
        <end position="939"/>
    </location>
</feature>
<feature type="compositionally biased region" description="Low complexity" evidence="1">
    <location>
        <begin position="940"/>
        <end position="968"/>
    </location>
</feature>
<feature type="compositionally biased region" description="Polar residues" evidence="1">
    <location>
        <begin position="1075"/>
        <end position="1085"/>
    </location>
</feature>
<feature type="compositionally biased region" description="Basic and acidic residues" evidence="1">
    <location>
        <begin position="1086"/>
        <end position="1095"/>
    </location>
</feature>
<feature type="compositionally biased region" description="Polar residues" evidence="1">
    <location>
        <begin position="1102"/>
        <end position="1111"/>
    </location>
</feature>
<feature type="compositionally biased region" description="Low complexity" evidence="1">
    <location>
        <begin position="1114"/>
        <end position="1149"/>
    </location>
</feature>
<feature type="compositionally biased region" description="Low complexity" evidence="1">
    <location>
        <begin position="1179"/>
        <end position="1195"/>
    </location>
</feature>
<feature type="sequence conflict" description="In Ref. 1; AAC18395." evidence="6" ref="1">
    <original>G</original>
    <variation>A</variation>
    <location>
        <position position="108"/>
    </location>
</feature>
<feature type="sequence conflict" description="In Ref. 1; AAC18395." evidence="6" ref="1">
    <original>P</original>
    <variation>S</variation>
    <location>
        <position position="928"/>
    </location>
</feature>
<sequence length="1195" mass="132341">MSHQEQQFQHYPHHQHHHHHHHHHIHQVQSETQLEQRSSDLEPNRSRNTDRIGSSMDFRNLCQRIDVDGLKAKLPQLKLPKSLPKLRGRKIFRSSKSGSNAAGGGTAGGSAKDGAGAAQQTHLQVAGQSQQFINRTPQRISTISSLMYEGEQEEIRANLGQSQPGTYRSAGSLDDDYYAPGSGDRASRPISPIKIPVVGALDDSSPSENGNVRTTFTQRLQRGYKSLSELRIKHIFAKQTTVRRDNIEVDRYVEQYERELKSEKLARERRDREIAENYDIKIKTLAGTRQNTFDDDDVEHEQFERGKISHETDESGMEATPPLPSRRKPGIAATRFAKVRKPPLEMEEEQQQAAAEESPQANPPPPPPPRPSSYKQLLINKLPHLPSLPNLPQFSRTKEETTKTAENADENNASRKLSIRQNIKRLRKSIKRPSKIKSKAAAPVPDSDEEEATPDGQKTKDAPTRSSTANLRARLSRFASTEQLQQRWRKSFKVAKEPEELETKAEGSATGGASGVLGGLLVGSQLEKTLAKLNEKVHQLKFFQRNANNQNATTSKQPKPNTVGHEPIEIDDDELEATYHRSDSLEAENGNGNENDDSGEDISAEEAFGQIQEEDNEEDHSQDQTKRGQSSVSGIATAHAARQMAKLAEIQAASKSGAAAWSSESLEEIADEDYPRVLIHQEHSDAYESTLIIAVASKGSSMSPVVRSSGLKSSPAAGPKTSPHPEIRISASGPQKSMSYSPGNPRGEPVTKRSPSPEFKTPAGGNKIVPKSETSAWLPNEQIIAGFKEQTSWPAPALYKPKSIDIFEASAGGSAAFADFDEALRNAPVLRISAGSSIDTSGEEADDSCSRVTRIRVQSPQIGNSRESLMAQEEEDKEAERDSEEEEEERDPSERPPSESPPPPPLPQRRPPTKRPATPPIYDAVPPPLPVSKPPPPPSVETIPSVASLPSPAPVTRSMAQRSASMSRPAKPLVKTSSLRLTYNEQVRPGDVGKVNKLISRFEGGRPRLCPRRMHSEEYERCAQPEDEEPEMEQILELQIIERRAVDSVTPTNRAVVIPQITVNNNNNNERQLEQSDQSDQSAHQEITDTRKTKSMELALDRQNSNCSRSEYGSPLSFPSSRRSSTPTNLNANSNSNPNPSTNPNQNPSQILQHQRRSRRSMTRDDDNFYSFDSDEENSYYSISPSGSSRYVVEI</sequence>
<dbReference type="EMBL" id="AF067153">
    <property type="protein sequence ID" value="AAC18395.1"/>
    <property type="molecule type" value="mRNA"/>
</dbReference>
<dbReference type="EMBL" id="AE014298">
    <property type="protein sequence ID" value="AAF46386.3"/>
    <property type="molecule type" value="Genomic_DNA"/>
</dbReference>
<dbReference type="EMBL" id="BT059799">
    <property type="protein sequence ID" value="ACN12159.1"/>
    <property type="molecule type" value="mRNA"/>
</dbReference>
<dbReference type="PIR" id="T13065">
    <property type="entry name" value="T13065"/>
</dbReference>
<dbReference type="RefSeq" id="NP_572487.3">
    <property type="nucleotide sequence ID" value="NM_132259.3"/>
</dbReference>
<dbReference type="FunCoup" id="Q9W3E2">
    <property type="interactions" value="7"/>
</dbReference>
<dbReference type="IntAct" id="Q9W3E2">
    <property type="interactions" value="3"/>
</dbReference>
<dbReference type="STRING" id="7227.FBpp0071179"/>
<dbReference type="PaxDb" id="7227-FBpp0071179"/>
<dbReference type="EnsemblMetazoa" id="FBtr0071235">
    <property type="protein sequence ID" value="FBpp0071179"/>
    <property type="gene ID" value="FBgn0024943"/>
</dbReference>
<dbReference type="GeneID" id="31791"/>
<dbReference type="KEGG" id="dme:Dmel_CG11219"/>
<dbReference type="UCSC" id="CG11219-RA">
    <property type="organism name" value="d. melanogaster"/>
</dbReference>
<dbReference type="AGR" id="FB:FBgn0024943"/>
<dbReference type="CTD" id="31791"/>
<dbReference type="FlyBase" id="FBgn0024943">
    <property type="gene designation" value="PIP82"/>
</dbReference>
<dbReference type="VEuPathDB" id="VectorBase:FBgn0024943"/>
<dbReference type="eggNOG" id="ENOG502T911">
    <property type="taxonomic scope" value="Eukaryota"/>
</dbReference>
<dbReference type="GeneTree" id="ENSGT00440000033589"/>
<dbReference type="HOGENOM" id="CLU_284044_0_0_1"/>
<dbReference type="InParanoid" id="Q9W3E2"/>
<dbReference type="OMA" id="CPRRMHS"/>
<dbReference type="OrthoDB" id="8043646at2759"/>
<dbReference type="PhylomeDB" id="Q9W3E2"/>
<dbReference type="BioGRID-ORCS" id="31791">
    <property type="hits" value="0 hits in 1 CRISPR screen"/>
</dbReference>
<dbReference type="ChiTaRS" id="PIP82">
    <property type="organism name" value="fly"/>
</dbReference>
<dbReference type="GenomeRNAi" id="31791"/>
<dbReference type="PRO" id="PR:Q9W3E2"/>
<dbReference type="Proteomes" id="UP000000803">
    <property type="component" value="Chromosome X"/>
</dbReference>
<dbReference type="Bgee" id="FBgn0024943">
    <property type="expression patterns" value="Expressed in outer photoreceptor cell (Drosophila) in insect head and 13 other cell types or tissues"/>
</dbReference>
<dbReference type="ExpressionAtlas" id="Q9W3E2">
    <property type="expression patterns" value="baseline and differential"/>
</dbReference>
<dbReference type="GO" id="GO:0045179">
    <property type="term" value="C:apical cortex"/>
    <property type="evidence" value="ECO:0000314"/>
    <property type="project" value="UniProtKB"/>
</dbReference>
<dbReference type="GO" id="GO:0005737">
    <property type="term" value="C:cytoplasm"/>
    <property type="evidence" value="ECO:0000318"/>
    <property type="project" value="GO_Central"/>
</dbReference>
<dbReference type="GO" id="GO:0005829">
    <property type="term" value="C:cytosol"/>
    <property type="evidence" value="ECO:0000314"/>
    <property type="project" value="UniProtKB"/>
</dbReference>
<dbReference type="GO" id="GO:0005634">
    <property type="term" value="C:nucleus"/>
    <property type="evidence" value="ECO:0000318"/>
    <property type="project" value="GO_Central"/>
</dbReference>
<dbReference type="GO" id="GO:0016028">
    <property type="term" value="C:rhabdomere"/>
    <property type="evidence" value="ECO:0000314"/>
    <property type="project" value="UniProtKB"/>
</dbReference>
<dbReference type="GO" id="GO:0071482">
    <property type="term" value="P:cellular response to light stimulus"/>
    <property type="evidence" value="ECO:0000314"/>
    <property type="project" value="FlyBase"/>
</dbReference>
<dbReference type="GO" id="GO:0046530">
    <property type="term" value="P:photoreceptor cell differentiation"/>
    <property type="evidence" value="ECO:0000315"/>
    <property type="project" value="UniProtKB"/>
</dbReference>
<dbReference type="GO" id="GO:0045494">
    <property type="term" value="P:photoreceptor cell maintenance"/>
    <property type="evidence" value="ECO:0000315"/>
    <property type="project" value="UniProtKB"/>
</dbReference>
<dbReference type="GO" id="GO:1990146">
    <property type="term" value="P:protein localization to rhabdomere"/>
    <property type="evidence" value="ECO:0000315"/>
    <property type="project" value="UniProtKB"/>
</dbReference>
<organism evidence="10">
    <name type="scientific">Drosophila melanogaster</name>
    <name type="common">Fruit fly</name>
    <dbReference type="NCBI Taxonomy" id="7227"/>
    <lineage>
        <taxon>Eukaryota</taxon>
        <taxon>Metazoa</taxon>
        <taxon>Ecdysozoa</taxon>
        <taxon>Arthropoda</taxon>
        <taxon>Hexapoda</taxon>
        <taxon>Insecta</taxon>
        <taxon>Pterygota</taxon>
        <taxon>Neoptera</taxon>
        <taxon>Endopterygota</taxon>
        <taxon>Diptera</taxon>
        <taxon>Brachycera</taxon>
        <taxon>Muscomorpha</taxon>
        <taxon>Ephydroidea</taxon>
        <taxon>Drosophilidae</taxon>
        <taxon>Drosophila</taxon>
        <taxon>Sophophora</taxon>
    </lineage>
</organism>